<reference key="1">
    <citation type="journal article" date="2002" name="Nucleic Acids Res.">
        <title>Genome sequence of Shigella flexneri 2a: insights into pathogenicity through comparison with genomes of Escherichia coli K12 and O157.</title>
        <authorList>
            <person name="Jin Q."/>
            <person name="Yuan Z."/>
            <person name="Xu J."/>
            <person name="Wang Y."/>
            <person name="Shen Y."/>
            <person name="Lu W."/>
            <person name="Wang J."/>
            <person name="Liu H."/>
            <person name="Yang J."/>
            <person name="Yang F."/>
            <person name="Zhang X."/>
            <person name="Zhang J."/>
            <person name="Yang G."/>
            <person name="Wu H."/>
            <person name="Qu D."/>
            <person name="Dong J."/>
            <person name="Sun L."/>
            <person name="Xue Y."/>
            <person name="Zhao A."/>
            <person name="Gao Y."/>
            <person name="Zhu J."/>
            <person name="Kan B."/>
            <person name="Ding K."/>
            <person name="Chen S."/>
            <person name="Cheng H."/>
            <person name="Yao Z."/>
            <person name="He B."/>
            <person name="Chen R."/>
            <person name="Ma D."/>
            <person name="Qiang B."/>
            <person name="Wen Y."/>
            <person name="Hou Y."/>
            <person name="Yu J."/>
        </authorList>
    </citation>
    <scope>NUCLEOTIDE SEQUENCE [LARGE SCALE GENOMIC DNA]</scope>
    <source>
        <strain>301 / Serotype 2a</strain>
    </source>
</reference>
<reference key="2">
    <citation type="journal article" date="2003" name="Infect. Immun.">
        <title>Complete genome sequence and comparative genomics of Shigella flexneri serotype 2a strain 2457T.</title>
        <authorList>
            <person name="Wei J."/>
            <person name="Goldberg M.B."/>
            <person name="Burland V."/>
            <person name="Venkatesan M.M."/>
            <person name="Deng W."/>
            <person name="Fournier G."/>
            <person name="Mayhew G.F."/>
            <person name="Plunkett G. III"/>
            <person name="Rose D.J."/>
            <person name="Darling A."/>
            <person name="Mau B."/>
            <person name="Perna N.T."/>
            <person name="Payne S.M."/>
            <person name="Runyen-Janecky L.J."/>
            <person name="Zhou S."/>
            <person name="Schwartz D.C."/>
            <person name="Blattner F.R."/>
        </authorList>
    </citation>
    <scope>NUCLEOTIDE SEQUENCE [LARGE SCALE GENOMIC DNA]</scope>
    <source>
        <strain>ATCC 700930 / 2457T / Serotype 2a</strain>
    </source>
</reference>
<protein>
    <recommendedName>
        <fullName evidence="1">K(+)/H(+) antiporter NhaP2</fullName>
    </recommendedName>
    <alternativeName>
        <fullName evidence="1">Potassium/proton antiporter NhaP2</fullName>
    </alternativeName>
</protein>
<proteinExistence type="inferred from homology"/>
<feature type="chain" id="PRO_0000052388" description="K(+)/H(+) antiporter NhaP2">
    <location>
        <begin position="1"/>
        <end position="578"/>
    </location>
</feature>
<feature type="transmembrane region" description="Helical" evidence="1">
    <location>
        <begin position="6"/>
        <end position="26"/>
    </location>
</feature>
<feature type="transmembrane region" description="Helical" evidence="1">
    <location>
        <begin position="30"/>
        <end position="50"/>
    </location>
</feature>
<feature type="transmembrane region" description="Helical" evidence="1">
    <location>
        <begin position="58"/>
        <end position="78"/>
    </location>
</feature>
<feature type="transmembrane region" description="Helical" evidence="1">
    <location>
        <begin position="87"/>
        <end position="107"/>
    </location>
</feature>
<feature type="transmembrane region" description="Helical" evidence="1">
    <location>
        <begin position="109"/>
        <end position="129"/>
    </location>
</feature>
<feature type="transmembrane region" description="Helical" evidence="1">
    <location>
        <begin position="156"/>
        <end position="176"/>
    </location>
</feature>
<feature type="transmembrane region" description="Helical" evidence="1">
    <location>
        <begin position="185"/>
        <end position="205"/>
    </location>
</feature>
<feature type="transmembrane region" description="Helical" evidence="1">
    <location>
        <begin position="216"/>
        <end position="236"/>
    </location>
</feature>
<feature type="transmembrane region" description="Helical" evidence="1">
    <location>
        <begin position="237"/>
        <end position="257"/>
    </location>
</feature>
<feature type="transmembrane region" description="Helical" evidence="1">
    <location>
        <begin position="270"/>
        <end position="290"/>
    </location>
</feature>
<feature type="transmembrane region" description="Helical" evidence="1">
    <location>
        <begin position="293"/>
        <end position="313"/>
    </location>
</feature>
<feature type="transmembrane region" description="Helical" evidence="1">
    <location>
        <begin position="334"/>
        <end position="354"/>
    </location>
</feature>
<feature type="transmembrane region" description="Helical" evidence="1">
    <location>
        <begin position="363"/>
        <end position="383"/>
    </location>
</feature>
<feature type="domain" description="RCK C-terminal" evidence="1">
    <location>
        <begin position="403"/>
        <end position="485"/>
    </location>
</feature>
<feature type="sequence conflict" description="In Ref. 2; AAP16687." evidence="2" ref="2">
    <original>L</original>
    <variation>P</variation>
    <location>
        <position position="413"/>
    </location>
</feature>
<dbReference type="EMBL" id="AE005674">
    <property type="protein sequence ID" value="AAN42796.2"/>
    <property type="status" value="ALT_INIT"/>
    <property type="molecule type" value="Genomic_DNA"/>
</dbReference>
<dbReference type="EMBL" id="AE014073">
    <property type="protein sequence ID" value="AAP16687.1"/>
    <property type="status" value="ALT_INIT"/>
    <property type="molecule type" value="Genomic_DNA"/>
</dbReference>
<dbReference type="RefSeq" id="NP_707089.4">
    <property type="nucleotide sequence ID" value="NC_004337.2"/>
</dbReference>
<dbReference type="SMR" id="Q83RQ1"/>
<dbReference type="STRING" id="198214.SF1181"/>
<dbReference type="PaxDb" id="198214-SF1181"/>
<dbReference type="GeneID" id="1026283"/>
<dbReference type="KEGG" id="sfl:SF1181"/>
<dbReference type="KEGG" id="sfx:S1269"/>
<dbReference type="PATRIC" id="fig|198214.7.peg.1396"/>
<dbReference type="HOGENOM" id="CLU_005912_9_2_6"/>
<dbReference type="Proteomes" id="UP000001006">
    <property type="component" value="Chromosome"/>
</dbReference>
<dbReference type="Proteomes" id="UP000002673">
    <property type="component" value="Chromosome"/>
</dbReference>
<dbReference type="GO" id="GO:0005886">
    <property type="term" value="C:plasma membrane"/>
    <property type="evidence" value="ECO:0007669"/>
    <property type="project" value="UniProtKB-SubCell"/>
</dbReference>
<dbReference type="GO" id="GO:0050660">
    <property type="term" value="F:flavin adenine dinucleotide binding"/>
    <property type="evidence" value="ECO:0007669"/>
    <property type="project" value="InterPro"/>
</dbReference>
<dbReference type="GO" id="GO:0015386">
    <property type="term" value="F:potassium:proton antiporter activity"/>
    <property type="evidence" value="ECO:0007669"/>
    <property type="project" value="UniProtKB-UniRule"/>
</dbReference>
<dbReference type="GO" id="GO:0006884">
    <property type="term" value="P:cell volume homeostasis"/>
    <property type="evidence" value="ECO:0007669"/>
    <property type="project" value="InterPro"/>
</dbReference>
<dbReference type="FunFam" id="1.20.1530.20:FF:000002">
    <property type="entry name" value="K(+)/H(+) antiporter NhaP2"/>
    <property type="match status" value="1"/>
</dbReference>
<dbReference type="FunFam" id="3.30.465.10:FF:000009">
    <property type="entry name" value="K(+)/H(+) antiporter NhaP2"/>
    <property type="match status" value="1"/>
</dbReference>
<dbReference type="FunFam" id="3.30.70.1450:FF:000007">
    <property type="entry name" value="K(+)/H(+) antiporter NhaP2"/>
    <property type="match status" value="1"/>
</dbReference>
<dbReference type="Gene3D" id="1.20.1530.20">
    <property type="match status" value="1"/>
</dbReference>
<dbReference type="Gene3D" id="3.30.465.10">
    <property type="match status" value="1"/>
</dbReference>
<dbReference type="Gene3D" id="3.30.70.1450">
    <property type="entry name" value="Regulator of K+ conductance, C-terminal domain"/>
    <property type="match status" value="1"/>
</dbReference>
<dbReference type="HAMAP" id="MF_01075">
    <property type="entry name" value="NhaP2"/>
    <property type="match status" value="1"/>
</dbReference>
<dbReference type="InterPro" id="IPR006153">
    <property type="entry name" value="Cation/H_exchanger_TM"/>
</dbReference>
<dbReference type="InterPro" id="IPR036318">
    <property type="entry name" value="FAD-bd_PCMH-like_sf"/>
</dbReference>
<dbReference type="InterPro" id="IPR016169">
    <property type="entry name" value="FAD-bd_PCMH_sub2"/>
</dbReference>
<dbReference type="InterPro" id="IPR038770">
    <property type="entry name" value="Na+/solute_symporter_sf"/>
</dbReference>
<dbReference type="InterPro" id="IPR023729">
    <property type="entry name" value="NhaP2"/>
</dbReference>
<dbReference type="InterPro" id="IPR006037">
    <property type="entry name" value="RCK_C"/>
</dbReference>
<dbReference type="InterPro" id="IPR036721">
    <property type="entry name" value="RCK_C_sf"/>
</dbReference>
<dbReference type="InterPro" id="IPR005170">
    <property type="entry name" value="Transptr-assoc_dom"/>
</dbReference>
<dbReference type="NCBIfam" id="NF003714">
    <property type="entry name" value="PRK05326.1-1"/>
    <property type="match status" value="1"/>
</dbReference>
<dbReference type="NCBIfam" id="NF003715">
    <property type="entry name" value="PRK05326.1-2"/>
    <property type="match status" value="1"/>
</dbReference>
<dbReference type="NCBIfam" id="NF003716">
    <property type="entry name" value="PRK05326.1-3"/>
    <property type="match status" value="1"/>
</dbReference>
<dbReference type="PANTHER" id="PTHR32507:SF7">
    <property type="entry name" value="K(+)_H(+) ANTIPORTER NHAP2"/>
    <property type="match status" value="1"/>
</dbReference>
<dbReference type="PANTHER" id="PTHR32507">
    <property type="entry name" value="NA(+)/H(+) ANTIPORTER 1"/>
    <property type="match status" value="1"/>
</dbReference>
<dbReference type="Pfam" id="PF03471">
    <property type="entry name" value="CorC_HlyC"/>
    <property type="match status" value="1"/>
</dbReference>
<dbReference type="Pfam" id="PF00999">
    <property type="entry name" value="Na_H_Exchanger"/>
    <property type="match status" value="1"/>
</dbReference>
<dbReference type="Pfam" id="PF02080">
    <property type="entry name" value="TrkA_C"/>
    <property type="match status" value="1"/>
</dbReference>
<dbReference type="SMART" id="SM01091">
    <property type="entry name" value="CorC_HlyC"/>
    <property type="match status" value="1"/>
</dbReference>
<dbReference type="SUPFAM" id="SSF56176">
    <property type="entry name" value="FAD-binding/transporter-associated domain-like"/>
    <property type="match status" value="1"/>
</dbReference>
<dbReference type="SUPFAM" id="SSF116726">
    <property type="entry name" value="TrkA C-terminal domain-like"/>
    <property type="match status" value="1"/>
</dbReference>
<dbReference type="PROSITE" id="PS51202">
    <property type="entry name" value="RCK_C"/>
    <property type="match status" value="1"/>
</dbReference>
<accession>Q83RQ1</accession>
<name>NHAP2_SHIFL</name>
<sequence>MDATTIISLFILGSILVTSSILLSSFSSRLGIPILVIFLAIGMLAGVDGVGGIPFDNYPFAYMVSNLALAIILLDGGMRTQASSFRVALGPALSLATLGVLITSGLTGMMAAWLFNLDLIEGLLIGAIVGSTDAAAVFSLLGGKGLNERVGSTLEIESGSNDPMAVFLTITLIAMIQQHESSVSWMFVVDILQQFGLGIVIGLGGGYLLLQMINRIALPAGLYPLLALSGGILIFALTTALEGSGILAVYLCGFLLGNRPIRNRYGILQNFDGLAWLAQIAMFLVLGLLVNPSDLLPIAIPALILSAWMIFFARPLSVFAGLLPFRGFNLRERVFISWVGLRGAVPIILAVFPMMAGLENARLFFNVAFFVVLVSLLLQGTSLSWAAKKAKVVVPPVGRPVSRVGLDIHPENLWEQFVYQLSADKWCVGAALRDLHMPKETRIAALFRDNQLLHPTGSTRLREGDVLCVIGRERDLPALGKLFSQSPPVALDQRFFGDFILEASAKYADVALIYGLEDGREYRDKQQTLGEIVQQLLGAAPVVGDQVEFAGMIWTVAEKEDNEVLKIGVRVAEEEAES</sequence>
<comment type="function">
    <text evidence="1">K(+)/H(+) antiporter that extrudes potassium in exchange for external protons and maintains the internal concentration of potassium under toxic levels.</text>
</comment>
<comment type="catalytic activity">
    <reaction evidence="1">
        <text>K(+)(in) + H(+)(out) = K(+)(out) + H(+)(in)</text>
        <dbReference type="Rhea" id="RHEA:29467"/>
        <dbReference type="ChEBI" id="CHEBI:15378"/>
        <dbReference type="ChEBI" id="CHEBI:29103"/>
    </reaction>
    <physiologicalReaction direction="left-to-right" evidence="1">
        <dbReference type="Rhea" id="RHEA:29468"/>
    </physiologicalReaction>
</comment>
<comment type="subcellular location">
    <subcellularLocation>
        <location evidence="1">Cell inner membrane</location>
        <topology evidence="1">Multi-pass membrane protein</topology>
    </subcellularLocation>
</comment>
<comment type="similarity">
    <text evidence="1">Belongs to the monovalent cation:proton antiporter 1 (CPA1) transporter (TC 2.A.36) family. NhaP2 subfamily.</text>
</comment>
<comment type="sequence caution" evidence="2">
    <conflict type="erroneous initiation">
        <sequence resource="EMBL-CDS" id="AAN42796"/>
    </conflict>
    <text>Truncated N-terminus.</text>
</comment>
<comment type="sequence caution" evidence="2">
    <conflict type="erroneous initiation">
        <sequence resource="EMBL-CDS" id="AAP16687"/>
    </conflict>
    <text>Truncated N-terminus.</text>
</comment>
<keyword id="KW-0050">Antiport</keyword>
<keyword id="KW-0997">Cell inner membrane</keyword>
<keyword id="KW-1003">Cell membrane</keyword>
<keyword id="KW-0406">Ion transport</keyword>
<keyword id="KW-0472">Membrane</keyword>
<keyword id="KW-0630">Potassium</keyword>
<keyword id="KW-0633">Potassium transport</keyword>
<keyword id="KW-1185">Reference proteome</keyword>
<keyword id="KW-0812">Transmembrane</keyword>
<keyword id="KW-1133">Transmembrane helix</keyword>
<keyword id="KW-0813">Transport</keyword>
<organism>
    <name type="scientific">Shigella flexneri</name>
    <dbReference type="NCBI Taxonomy" id="623"/>
    <lineage>
        <taxon>Bacteria</taxon>
        <taxon>Pseudomonadati</taxon>
        <taxon>Pseudomonadota</taxon>
        <taxon>Gammaproteobacteria</taxon>
        <taxon>Enterobacterales</taxon>
        <taxon>Enterobacteriaceae</taxon>
        <taxon>Shigella</taxon>
    </lineage>
</organism>
<evidence type="ECO:0000255" key="1">
    <source>
        <dbReference type="HAMAP-Rule" id="MF_01075"/>
    </source>
</evidence>
<evidence type="ECO:0000305" key="2"/>
<gene>
    <name evidence="1" type="primary">nhaP2</name>
    <name type="synonym">cvrA</name>
    <name type="ordered locus">SF1181</name>
    <name type="ordered locus">S1269</name>
</gene>